<sequence length="232" mass="25954">MGQKVNPIGLRLGINRNWESRWFPTKASLPENIGEDYKIRAFLKKKLYYAGISQILIERTAKKLRVTVVAARPGIIIGKKGQDVENLKNDVSKLIGKEVNVNIKEERKAQASAQLAAENVAMQLEKRVAFRRAMKKVIQGAQKSGAKGIKISVAGRLGGAEMARTEWYLEGRVPLHTLRAKIDYGVAEAHTTYGNIGIKVWIFKGEVLQKGVQPEKTEDDAPKKTRRPRRGK</sequence>
<keyword id="KW-1185">Reference proteome</keyword>
<keyword id="KW-0687">Ribonucleoprotein</keyword>
<keyword id="KW-0689">Ribosomal protein</keyword>
<keyword id="KW-0694">RNA-binding</keyword>
<keyword id="KW-0699">rRNA-binding</keyword>
<reference key="1">
    <citation type="submission" date="2007-07" db="EMBL/GenBank/DDBJ databases">
        <title>Genome sequence of Campylobacter curvus 525.92 isolated from human feces.</title>
        <authorList>
            <person name="Fouts D.E."/>
            <person name="Mongodin E.F."/>
            <person name="Puiu D."/>
            <person name="Sebastian Y."/>
            <person name="Miller W.G."/>
            <person name="Mandrell R.E."/>
            <person name="Lastovica A.J."/>
            <person name="Nelson K.E."/>
        </authorList>
    </citation>
    <scope>NUCLEOTIDE SEQUENCE [LARGE SCALE GENOMIC DNA]</scope>
    <source>
        <strain>525.92</strain>
    </source>
</reference>
<proteinExistence type="inferred from homology"/>
<gene>
    <name evidence="1" type="primary">rpsC</name>
    <name type="ordered locus">Ccur92_18440</name>
    <name type="ORF">CCV52592_1027</name>
</gene>
<dbReference type="EMBL" id="CP000767">
    <property type="protein sequence ID" value="EAT99605.1"/>
    <property type="molecule type" value="Genomic_DNA"/>
</dbReference>
<dbReference type="RefSeq" id="WP_009649492.1">
    <property type="nucleotide sequence ID" value="NC_009715.2"/>
</dbReference>
<dbReference type="SMR" id="A7H106"/>
<dbReference type="STRING" id="360105.CCV52592_1027"/>
<dbReference type="GeneID" id="61003092"/>
<dbReference type="KEGG" id="ccv:CCV52592_1027"/>
<dbReference type="HOGENOM" id="CLU_058591_0_2_7"/>
<dbReference type="OrthoDB" id="9806396at2"/>
<dbReference type="Proteomes" id="UP000006380">
    <property type="component" value="Chromosome"/>
</dbReference>
<dbReference type="GO" id="GO:0022627">
    <property type="term" value="C:cytosolic small ribosomal subunit"/>
    <property type="evidence" value="ECO:0007669"/>
    <property type="project" value="TreeGrafter"/>
</dbReference>
<dbReference type="GO" id="GO:0003729">
    <property type="term" value="F:mRNA binding"/>
    <property type="evidence" value="ECO:0007669"/>
    <property type="project" value="UniProtKB-UniRule"/>
</dbReference>
<dbReference type="GO" id="GO:0019843">
    <property type="term" value="F:rRNA binding"/>
    <property type="evidence" value="ECO:0007669"/>
    <property type="project" value="UniProtKB-UniRule"/>
</dbReference>
<dbReference type="GO" id="GO:0003735">
    <property type="term" value="F:structural constituent of ribosome"/>
    <property type="evidence" value="ECO:0007669"/>
    <property type="project" value="InterPro"/>
</dbReference>
<dbReference type="GO" id="GO:0006412">
    <property type="term" value="P:translation"/>
    <property type="evidence" value="ECO:0007669"/>
    <property type="project" value="UniProtKB-UniRule"/>
</dbReference>
<dbReference type="CDD" id="cd02412">
    <property type="entry name" value="KH-II_30S_S3"/>
    <property type="match status" value="1"/>
</dbReference>
<dbReference type="FunFam" id="3.30.1140.32:FF:000006">
    <property type="entry name" value="30S ribosomal protein S3"/>
    <property type="match status" value="1"/>
</dbReference>
<dbReference type="FunFam" id="3.30.300.20:FF:000001">
    <property type="entry name" value="30S ribosomal protein S3"/>
    <property type="match status" value="1"/>
</dbReference>
<dbReference type="Gene3D" id="3.30.300.20">
    <property type="match status" value="1"/>
</dbReference>
<dbReference type="Gene3D" id="3.30.1140.32">
    <property type="entry name" value="Ribosomal protein S3, C-terminal domain"/>
    <property type="match status" value="1"/>
</dbReference>
<dbReference type="HAMAP" id="MF_01309_B">
    <property type="entry name" value="Ribosomal_uS3_B"/>
    <property type="match status" value="1"/>
</dbReference>
<dbReference type="InterPro" id="IPR004087">
    <property type="entry name" value="KH_dom"/>
</dbReference>
<dbReference type="InterPro" id="IPR015946">
    <property type="entry name" value="KH_dom-like_a/b"/>
</dbReference>
<dbReference type="InterPro" id="IPR004044">
    <property type="entry name" value="KH_dom_type_2"/>
</dbReference>
<dbReference type="InterPro" id="IPR009019">
    <property type="entry name" value="KH_sf_prok-type"/>
</dbReference>
<dbReference type="InterPro" id="IPR036419">
    <property type="entry name" value="Ribosomal_S3_C_sf"/>
</dbReference>
<dbReference type="InterPro" id="IPR005704">
    <property type="entry name" value="Ribosomal_uS3_bac-typ"/>
</dbReference>
<dbReference type="InterPro" id="IPR001351">
    <property type="entry name" value="Ribosomal_uS3_C"/>
</dbReference>
<dbReference type="InterPro" id="IPR018280">
    <property type="entry name" value="Ribosomal_uS3_CS"/>
</dbReference>
<dbReference type="NCBIfam" id="TIGR01009">
    <property type="entry name" value="rpsC_bact"/>
    <property type="match status" value="1"/>
</dbReference>
<dbReference type="PANTHER" id="PTHR11760">
    <property type="entry name" value="30S/40S RIBOSOMAL PROTEIN S3"/>
    <property type="match status" value="1"/>
</dbReference>
<dbReference type="PANTHER" id="PTHR11760:SF19">
    <property type="entry name" value="SMALL RIBOSOMAL SUBUNIT PROTEIN US3C"/>
    <property type="match status" value="1"/>
</dbReference>
<dbReference type="Pfam" id="PF07650">
    <property type="entry name" value="KH_2"/>
    <property type="match status" value="1"/>
</dbReference>
<dbReference type="Pfam" id="PF00189">
    <property type="entry name" value="Ribosomal_S3_C"/>
    <property type="match status" value="1"/>
</dbReference>
<dbReference type="SMART" id="SM00322">
    <property type="entry name" value="KH"/>
    <property type="match status" value="1"/>
</dbReference>
<dbReference type="SUPFAM" id="SSF54814">
    <property type="entry name" value="Prokaryotic type KH domain (KH-domain type II)"/>
    <property type="match status" value="1"/>
</dbReference>
<dbReference type="SUPFAM" id="SSF54821">
    <property type="entry name" value="Ribosomal protein S3 C-terminal domain"/>
    <property type="match status" value="1"/>
</dbReference>
<dbReference type="PROSITE" id="PS50823">
    <property type="entry name" value="KH_TYPE_2"/>
    <property type="match status" value="1"/>
</dbReference>
<dbReference type="PROSITE" id="PS00548">
    <property type="entry name" value="RIBOSOMAL_S3"/>
    <property type="match status" value="1"/>
</dbReference>
<comment type="function">
    <text evidence="1">Binds the lower part of the 30S subunit head. Binds mRNA in the 70S ribosome, positioning it for translation.</text>
</comment>
<comment type="subunit">
    <text evidence="1">Part of the 30S ribosomal subunit. Forms a tight complex with proteins S10 and S14.</text>
</comment>
<comment type="similarity">
    <text evidence="1">Belongs to the universal ribosomal protein uS3 family.</text>
</comment>
<feature type="chain" id="PRO_0000323290" description="Small ribosomal subunit protein uS3">
    <location>
        <begin position="1"/>
        <end position="232"/>
    </location>
</feature>
<feature type="domain" description="KH type-2" evidence="1">
    <location>
        <begin position="39"/>
        <end position="107"/>
    </location>
</feature>
<feature type="region of interest" description="Disordered" evidence="2">
    <location>
        <begin position="212"/>
        <end position="232"/>
    </location>
</feature>
<feature type="compositionally biased region" description="Basic and acidic residues" evidence="2">
    <location>
        <begin position="213"/>
        <end position="223"/>
    </location>
</feature>
<protein>
    <recommendedName>
        <fullName evidence="1">Small ribosomal subunit protein uS3</fullName>
    </recommendedName>
    <alternativeName>
        <fullName evidence="3">30S ribosomal protein S3</fullName>
    </alternativeName>
</protein>
<evidence type="ECO:0000255" key="1">
    <source>
        <dbReference type="HAMAP-Rule" id="MF_01309"/>
    </source>
</evidence>
<evidence type="ECO:0000256" key="2">
    <source>
        <dbReference type="SAM" id="MobiDB-lite"/>
    </source>
</evidence>
<evidence type="ECO:0000305" key="3"/>
<organism>
    <name type="scientific">Campylobacter curvus (strain 525.92)</name>
    <dbReference type="NCBI Taxonomy" id="360105"/>
    <lineage>
        <taxon>Bacteria</taxon>
        <taxon>Pseudomonadati</taxon>
        <taxon>Campylobacterota</taxon>
        <taxon>Epsilonproteobacteria</taxon>
        <taxon>Campylobacterales</taxon>
        <taxon>Campylobacteraceae</taxon>
        <taxon>Campylobacter</taxon>
    </lineage>
</organism>
<name>RS3_CAMC5</name>
<accession>A7H106</accession>